<evidence type="ECO:0000255" key="1">
    <source>
        <dbReference type="HAMAP-Rule" id="MF_00145"/>
    </source>
</evidence>
<comment type="catalytic activity">
    <reaction evidence="1">
        <text>(2R)-3-phosphoglycerate + ATP = (2R)-3-phospho-glyceroyl phosphate + ADP</text>
        <dbReference type="Rhea" id="RHEA:14801"/>
        <dbReference type="ChEBI" id="CHEBI:30616"/>
        <dbReference type="ChEBI" id="CHEBI:57604"/>
        <dbReference type="ChEBI" id="CHEBI:58272"/>
        <dbReference type="ChEBI" id="CHEBI:456216"/>
        <dbReference type="EC" id="2.7.2.3"/>
    </reaction>
</comment>
<comment type="pathway">
    <text evidence="1">Carbohydrate degradation; glycolysis; pyruvate from D-glyceraldehyde 3-phosphate: step 2/5.</text>
</comment>
<comment type="subunit">
    <text evidence="1">Monomer.</text>
</comment>
<comment type="subcellular location">
    <subcellularLocation>
        <location evidence="1">Cytoplasm</location>
    </subcellularLocation>
</comment>
<comment type="similarity">
    <text evidence="1">Belongs to the phosphoglycerate kinase family.</text>
</comment>
<proteinExistence type="inferred from homology"/>
<keyword id="KW-0067">ATP-binding</keyword>
<keyword id="KW-0963">Cytoplasm</keyword>
<keyword id="KW-0324">Glycolysis</keyword>
<keyword id="KW-0418">Kinase</keyword>
<keyword id="KW-0547">Nucleotide-binding</keyword>
<keyword id="KW-0808">Transferase</keyword>
<gene>
    <name evidence="1" type="primary">pgk</name>
    <name type="ordered locus">syc0433_c</name>
</gene>
<sequence>MSKRTLASLTAADLEGKRVLVRVDFNVPLDGNGKITDDTRIRAALPTIRYLSESGAKVILVSHFGRPKGKPVESMRLTPVAERLSELLGRPVVKTTDAVGAGAEAQVAATSNGQVVLLENVRFHAEEEANDAEFAKALASLADIYVNDAFGAAHRAHAPTAGVTEYLSPCVAGYLLEKELQYLQAAIDNPQRPLAAIVGGSKVSSKIGVIETLLDKCDKLLIGGGMIFTFYKAQGLSVGGSLVEEDKLDLARSLMAKAQEKGVQLLLPVDVVVADKFAPDANAKTVAIDAIPDGWMGLDIGPESVKQFEGALADCRSVIWNGPMGVFEFDQFAVGTEAIARSLAGLTRKGATTIIGGGDSVAAVEKVGVASEMSHISTGGGASLELLEGKVLPGVAALDDAA</sequence>
<accession>Q5N4Z6</accession>
<organism>
    <name type="scientific">Synechococcus sp. (strain ATCC 27144 / PCC 6301 / SAUG 1402/1)</name>
    <name type="common">Anacystis nidulans</name>
    <dbReference type="NCBI Taxonomy" id="269084"/>
    <lineage>
        <taxon>Bacteria</taxon>
        <taxon>Bacillati</taxon>
        <taxon>Cyanobacteriota</taxon>
        <taxon>Cyanophyceae</taxon>
        <taxon>Synechococcales</taxon>
        <taxon>Synechococcaceae</taxon>
        <taxon>Synechococcus</taxon>
    </lineage>
</organism>
<reference key="1">
    <citation type="journal article" date="2007" name="Photosyn. Res.">
        <title>Complete nucleotide sequence of the freshwater unicellular cyanobacterium Synechococcus elongatus PCC 6301 chromosome: gene content and organization.</title>
        <authorList>
            <person name="Sugita C."/>
            <person name="Ogata K."/>
            <person name="Shikata M."/>
            <person name="Jikuya H."/>
            <person name="Takano J."/>
            <person name="Furumichi M."/>
            <person name="Kanehisa M."/>
            <person name="Omata T."/>
            <person name="Sugiura M."/>
            <person name="Sugita M."/>
        </authorList>
    </citation>
    <scope>NUCLEOTIDE SEQUENCE [LARGE SCALE GENOMIC DNA]</scope>
    <source>
        <strain>ATCC 27144 / PCC 6301 / SAUG 1402/1</strain>
    </source>
</reference>
<dbReference type="EC" id="2.7.2.3" evidence="1"/>
<dbReference type="EMBL" id="AP008231">
    <property type="protein sequence ID" value="BAD78623.1"/>
    <property type="molecule type" value="Genomic_DNA"/>
</dbReference>
<dbReference type="RefSeq" id="WP_011242745.1">
    <property type="nucleotide sequence ID" value="NC_006576.1"/>
</dbReference>
<dbReference type="SMR" id="Q5N4Z6"/>
<dbReference type="KEGG" id="syc:syc0433_c"/>
<dbReference type="eggNOG" id="COG0126">
    <property type="taxonomic scope" value="Bacteria"/>
</dbReference>
<dbReference type="UniPathway" id="UPA00109">
    <property type="reaction ID" value="UER00185"/>
</dbReference>
<dbReference type="Proteomes" id="UP000001175">
    <property type="component" value="Chromosome"/>
</dbReference>
<dbReference type="GO" id="GO:0005829">
    <property type="term" value="C:cytosol"/>
    <property type="evidence" value="ECO:0007669"/>
    <property type="project" value="TreeGrafter"/>
</dbReference>
<dbReference type="GO" id="GO:0043531">
    <property type="term" value="F:ADP binding"/>
    <property type="evidence" value="ECO:0007669"/>
    <property type="project" value="TreeGrafter"/>
</dbReference>
<dbReference type="GO" id="GO:0005524">
    <property type="term" value="F:ATP binding"/>
    <property type="evidence" value="ECO:0007669"/>
    <property type="project" value="UniProtKB-KW"/>
</dbReference>
<dbReference type="GO" id="GO:0004618">
    <property type="term" value="F:phosphoglycerate kinase activity"/>
    <property type="evidence" value="ECO:0007669"/>
    <property type="project" value="UniProtKB-UniRule"/>
</dbReference>
<dbReference type="GO" id="GO:0006094">
    <property type="term" value="P:gluconeogenesis"/>
    <property type="evidence" value="ECO:0007669"/>
    <property type="project" value="TreeGrafter"/>
</dbReference>
<dbReference type="GO" id="GO:0006096">
    <property type="term" value="P:glycolytic process"/>
    <property type="evidence" value="ECO:0007669"/>
    <property type="project" value="UniProtKB-UniRule"/>
</dbReference>
<dbReference type="CDD" id="cd00318">
    <property type="entry name" value="Phosphoglycerate_kinase"/>
    <property type="match status" value="1"/>
</dbReference>
<dbReference type="FunFam" id="3.40.50.1260:FF:000003">
    <property type="entry name" value="Phosphoglycerate kinase"/>
    <property type="match status" value="1"/>
</dbReference>
<dbReference type="FunFam" id="3.40.50.1260:FF:000006">
    <property type="entry name" value="Phosphoglycerate kinase"/>
    <property type="match status" value="1"/>
</dbReference>
<dbReference type="FunFam" id="3.40.50.1260:FF:000017">
    <property type="entry name" value="Phosphoglycerate kinase"/>
    <property type="match status" value="1"/>
</dbReference>
<dbReference type="Gene3D" id="3.40.50.1260">
    <property type="entry name" value="Phosphoglycerate kinase, N-terminal domain"/>
    <property type="match status" value="2"/>
</dbReference>
<dbReference type="HAMAP" id="MF_00145">
    <property type="entry name" value="Phosphoglyc_kinase"/>
    <property type="match status" value="1"/>
</dbReference>
<dbReference type="InterPro" id="IPR001576">
    <property type="entry name" value="Phosphoglycerate_kinase"/>
</dbReference>
<dbReference type="InterPro" id="IPR015911">
    <property type="entry name" value="Phosphoglycerate_kinase_CS"/>
</dbReference>
<dbReference type="InterPro" id="IPR015824">
    <property type="entry name" value="Phosphoglycerate_kinase_N"/>
</dbReference>
<dbReference type="InterPro" id="IPR036043">
    <property type="entry name" value="Phosphoglycerate_kinase_sf"/>
</dbReference>
<dbReference type="PANTHER" id="PTHR11406">
    <property type="entry name" value="PHOSPHOGLYCERATE KINASE"/>
    <property type="match status" value="1"/>
</dbReference>
<dbReference type="PANTHER" id="PTHR11406:SF23">
    <property type="entry name" value="PHOSPHOGLYCERATE KINASE 1, CHLOROPLASTIC-RELATED"/>
    <property type="match status" value="1"/>
</dbReference>
<dbReference type="Pfam" id="PF00162">
    <property type="entry name" value="PGK"/>
    <property type="match status" value="1"/>
</dbReference>
<dbReference type="PIRSF" id="PIRSF000724">
    <property type="entry name" value="Pgk"/>
    <property type="match status" value="1"/>
</dbReference>
<dbReference type="PRINTS" id="PR00477">
    <property type="entry name" value="PHGLYCKINASE"/>
</dbReference>
<dbReference type="SUPFAM" id="SSF53748">
    <property type="entry name" value="Phosphoglycerate kinase"/>
    <property type="match status" value="1"/>
</dbReference>
<dbReference type="PROSITE" id="PS00111">
    <property type="entry name" value="PGLYCERATE_KINASE"/>
    <property type="match status" value="1"/>
</dbReference>
<feature type="chain" id="PRO_1000058077" description="Phosphoglycerate kinase">
    <location>
        <begin position="1"/>
        <end position="402"/>
    </location>
</feature>
<feature type="binding site" evidence="1">
    <location>
        <begin position="24"/>
        <end position="26"/>
    </location>
    <ligand>
        <name>substrate</name>
    </ligand>
</feature>
<feature type="binding site" evidence="1">
    <location>
        <position position="40"/>
    </location>
    <ligand>
        <name>substrate</name>
    </ligand>
</feature>
<feature type="binding site" evidence="1">
    <location>
        <begin position="63"/>
        <end position="66"/>
    </location>
    <ligand>
        <name>substrate</name>
    </ligand>
</feature>
<feature type="binding site" evidence="1">
    <location>
        <position position="122"/>
    </location>
    <ligand>
        <name>substrate</name>
    </ligand>
</feature>
<feature type="binding site" evidence="1">
    <location>
        <position position="155"/>
    </location>
    <ligand>
        <name>substrate</name>
    </ligand>
</feature>
<feature type="binding site" evidence="1">
    <location>
        <position position="206"/>
    </location>
    <ligand>
        <name>ATP</name>
        <dbReference type="ChEBI" id="CHEBI:30616"/>
    </ligand>
</feature>
<feature type="binding site" evidence="1">
    <location>
        <position position="297"/>
    </location>
    <ligand>
        <name>ATP</name>
        <dbReference type="ChEBI" id="CHEBI:30616"/>
    </ligand>
</feature>
<feature type="binding site" evidence="1">
    <location>
        <position position="328"/>
    </location>
    <ligand>
        <name>ATP</name>
        <dbReference type="ChEBI" id="CHEBI:30616"/>
    </ligand>
</feature>
<feature type="binding site" evidence="1">
    <location>
        <begin position="357"/>
        <end position="360"/>
    </location>
    <ligand>
        <name>ATP</name>
        <dbReference type="ChEBI" id="CHEBI:30616"/>
    </ligand>
</feature>
<protein>
    <recommendedName>
        <fullName evidence="1">Phosphoglycerate kinase</fullName>
        <ecNumber evidence="1">2.7.2.3</ecNumber>
    </recommendedName>
</protein>
<name>PGK_SYNP6</name>